<feature type="chain" id="PRO_1000072931" description="1-(5-phosphoribosyl)-5-[(5-phosphoribosylamino)methylideneamino] imidazole-4-carboxamide isomerase">
    <location>
        <begin position="1"/>
        <end position="243"/>
    </location>
</feature>
<feature type="active site" description="Proton acceptor" evidence="1">
    <location>
        <position position="8"/>
    </location>
</feature>
<feature type="active site" description="Proton donor" evidence="1">
    <location>
        <position position="129"/>
    </location>
</feature>
<proteinExistence type="inferred from homology"/>
<name>HIS4_AZOC5</name>
<gene>
    <name evidence="1" type="primary">hisA</name>
    <name type="ordered locus">AZC_4499</name>
</gene>
<protein>
    <recommendedName>
        <fullName evidence="1">1-(5-phosphoribosyl)-5-[(5-phosphoribosylamino)methylideneamino] imidazole-4-carboxamide isomerase</fullName>
        <ecNumber evidence="1">5.3.1.16</ecNumber>
    </recommendedName>
    <alternativeName>
        <fullName evidence="1">Phosphoribosylformimino-5-aminoimidazole carboxamide ribotide isomerase</fullName>
    </alternativeName>
</protein>
<accession>A8HYT9</accession>
<sequence>MILFPAIDLKDGLAVRLEQGDMDRATVFNRDPASQAGEFEALGFRYLHLVDLNGAFAGHPVNAAAVDRILETVSIPVQLGGGIRDMKTVDGWLEKGVTRVILGTAAVRDPDFVKAAAKAHPGRVVVGLDARDGNVAVQGWAETSNLPAVDIARRFEDAGVSAIIYTDIARDGLLKGLNMDATIALADAVSIPVIASGGLASLADVEALLEPRAKKLAGAITGRALYDGRLDPGAALALVAGRS</sequence>
<comment type="catalytic activity">
    <reaction evidence="1">
        <text>1-(5-phospho-beta-D-ribosyl)-5-[(5-phospho-beta-D-ribosylamino)methylideneamino]imidazole-4-carboxamide = 5-[(5-phospho-1-deoxy-D-ribulos-1-ylimino)methylamino]-1-(5-phospho-beta-D-ribosyl)imidazole-4-carboxamide</text>
        <dbReference type="Rhea" id="RHEA:15469"/>
        <dbReference type="ChEBI" id="CHEBI:58435"/>
        <dbReference type="ChEBI" id="CHEBI:58525"/>
        <dbReference type="EC" id="5.3.1.16"/>
    </reaction>
</comment>
<comment type="pathway">
    <text evidence="1">Amino-acid biosynthesis; L-histidine biosynthesis; L-histidine from 5-phospho-alpha-D-ribose 1-diphosphate: step 4/9.</text>
</comment>
<comment type="subcellular location">
    <subcellularLocation>
        <location evidence="1">Cytoplasm</location>
    </subcellularLocation>
</comment>
<comment type="similarity">
    <text evidence="1">Belongs to the HisA/HisF family.</text>
</comment>
<reference key="1">
    <citation type="submission" date="2007-04" db="EMBL/GenBank/DDBJ databases">
        <title>Complete genome sequence of the nitrogen-fixing bacterium Azorhizobium caulinodans ORS571.</title>
        <authorList>
            <person name="Lee K.B."/>
            <person name="Backer P.D."/>
            <person name="Aono T."/>
            <person name="Liu C.T."/>
            <person name="Suzuki S."/>
            <person name="Suzuki T."/>
            <person name="Kaneko T."/>
            <person name="Yamada M."/>
            <person name="Tabata S."/>
            <person name="Kupfer D.M."/>
            <person name="Najar F.Z."/>
            <person name="Wiley G.B."/>
            <person name="Roe B."/>
            <person name="Binnewies T."/>
            <person name="Ussery D."/>
            <person name="Vereecke D."/>
            <person name="Gevers D."/>
            <person name="Holsters M."/>
            <person name="Oyaizu H."/>
        </authorList>
    </citation>
    <scope>NUCLEOTIDE SEQUENCE [LARGE SCALE GENOMIC DNA]</scope>
    <source>
        <strain>ATCC 43989 / DSM 5975 / JCM 20966 / LMG 6465 / NBRC 14845 / NCIMB 13405 / ORS 571</strain>
    </source>
</reference>
<evidence type="ECO:0000255" key="1">
    <source>
        <dbReference type="HAMAP-Rule" id="MF_01014"/>
    </source>
</evidence>
<keyword id="KW-0028">Amino-acid biosynthesis</keyword>
<keyword id="KW-0963">Cytoplasm</keyword>
<keyword id="KW-0368">Histidine biosynthesis</keyword>
<keyword id="KW-0413">Isomerase</keyword>
<keyword id="KW-1185">Reference proteome</keyword>
<dbReference type="EC" id="5.3.1.16" evidence="1"/>
<dbReference type="EMBL" id="AP009384">
    <property type="protein sequence ID" value="BAF90497.1"/>
    <property type="molecule type" value="Genomic_DNA"/>
</dbReference>
<dbReference type="RefSeq" id="WP_012173018.1">
    <property type="nucleotide sequence ID" value="NC_009937.1"/>
</dbReference>
<dbReference type="SMR" id="A8HYT9"/>
<dbReference type="STRING" id="438753.AZC_4499"/>
<dbReference type="KEGG" id="azc:AZC_4499"/>
<dbReference type="eggNOG" id="COG0106">
    <property type="taxonomic scope" value="Bacteria"/>
</dbReference>
<dbReference type="HOGENOM" id="CLU_048577_1_1_5"/>
<dbReference type="UniPathway" id="UPA00031">
    <property type="reaction ID" value="UER00009"/>
</dbReference>
<dbReference type="Proteomes" id="UP000000270">
    <property type="component" value="Chromosome"/>
</dbReference>
<dbReference type="GO" id="GO:0005737">
    <property type="term" value="C:cytoplasm"/>
    <property type="evidence" value="ECO:0007669"/>
    <property type="project" value="UniProtKB-SubCell"/>
</dbReference>
<dbReference type="GO" id="GO:0003949">
    <property type="term" value="F:1-(5-phosphoribosyl)-5-[(5-phosphoribosylamino)methylideneamino]imidazole-4-carboxamide isomerase activity"/>
    <property type="evidence" value="ECO:0007669"/>
    <property type="project" value="UniProtKB-UniRule"/>
</dbReference>
<dbReference type="GO" id="GO:0000105">
    <property type="term" value="P:L-histidine biosynthetic process"/>
    <property type="evidence" value="ECO:0007669"/>
    <property type="project" value="UniProtKB-UniRule"/>
</dbReference>
<dbReference type="GO" id="GO:0000162">
    <property type="term" value="P:L-tryptophan biosynthetic process"/>
    <property type="evidence" value="ECO:0007669"/>
    <property type="project" value="TreeGrafter"/>
</dbReference>
<dbReference type="CDD" id="cd04732">
    <property type="entry name" value="HisA"/>
    <property type="match status" value="1"/>
</dbReference>
<dbReference type="FunFam" id="3.20.20.70:FF:000009">
    <property type="entry name" value="1-(5-phosphoribosyl)-5-[(5-phosphoribosylamino)methylideneamino] imidazole-4-carboxamide isomerase"/>
    <property type="match status" value="1"/>
</dbReference>
<dbReference type="Gene3D" id="3.20.20.70">
    <property type="entry name" value="Aldolase class I"/>
    <property type="match status" value="1"/>
</dbReference>
<dbReference type="HAMAP" id="MF_01014">
    <property type="entry name" value="HisA"/>
    <property type="match status" value="1"/>
</dbReference>
<dbReference type="InterPro" id="IPR013785">
    <property type="entry name" value="Aldolase_TIM"/>
</dbReference>
<dbReference type="InterPro" id="IPR006062">
    <property type="entry name" value="His_biosynth"/>
</dbReference>
<dbReference type="InterPro" id="IPR006063">
    <property type="entry name" value="HisA_bact_arch"/>
</dbReference>
<dbReference type="InterPro" id="IPR044524">
    <property type="entry name" value="Isoase_HisA-like"/>
</dbReference>
<dbReference type="InterPro" id="IPR023016">
    <property type="entry name" value="Isoase_HisA-like_bact"/>
</dbReference>
<dbReference type="InterPro" id="IPR011060">
    <property type="entry name" value="RibuloseP-bd_barrel"/>
</dbReference>
<dbReference type="NCBIfam" id="TIGR00007">
    <property type="entry name" value="1-(5-phosphoribosyl)-5-[(5-phosphoribosylamino)methylideneamino]imidazole-4-carboxamide isomerase"/>
    <property type="match status" value="1"/>
</dbReference>
<dbReference type="PANTHER" id="PTHR43090">
    <property type="entry name" value="1-(5-PHOSPHORIBOSYL)-5-[(5-PHOSPHORIBOSYLAMINO)METHYLIDENEAMINO] IMIDAZOLE-4-CARBOXAMIDE ISOMERASE"/>
    <property type="match status" value="1"/>
</dbReference>
<dbReference type="PANTHER" id="PTHR43090:SF2">
    <property type="entry name" value="1-(5-PHOSPHORIBOSYL)-5-[(5-PHOSPHORIBOSYLAMINO)METHYLIDENEAMINO] IMIDAZOLE-4-CARBOXAMIDE ISOMERASE"/>
    <property type="match status" value="1"/>
</dbReference>
<dbReference type="Pfam" id="PF00977">
    <property type="entry name" value="His_biosynth"/>
    <property type="match status" value="1"/>
</dbReference>
<dbReference type="SUPFAM" id="SSF51366">
    <property type="entry name" value="Ribulose-phoshate binding barrel"/>
    <property type="match status" value="1"/>
</dbReference>
<organism>
    <name type="scientific">Azorhizobium caulinodans (strain ATCC 43989 / DSM 5975 / JCM 20966 / LMG 6465 / NBRC 14845 / NCIMB 13405 / ORS 571)</name>
    <dbReference type="NCBI Taxonomy" id="438753"/>
    <lineage>
        <taxon>Bacteria</taxon>
        <taxon>Pseudomonadati</taxon>
        <taxon>Pseudomonadota</taxon>
        <taxon>Alphaproteobacteria</taxon>
        <taxon>Hyphomicrobiales</taxon>
        <taxon>Xanthobacteraceae</taxon>
        <taxon>Azorhizobium</taxon>
    </lineage>
</organism>